<accession>Q9JKL7</accession>
<feature type="chain" id="PRO_0000081942" description="Splicing regulatory glutamine/lysine-rich protein 1">
    <location>
        <begin position="1"/>
        <end position="494"/>
    </location>
</feature>
<feature type="domain" description="RRM" evidence="3">
    <location>
        <begin position="69"/>
        <end position="145"/>
    </location>
</feature>
<feature type="region of interest" description="Disordered" evidence="4">
    <location>
        <begin position="176"/>
        <end position="494"/>
    </location>
</feature>
<feature type="compositionally biased region" description="Basic and acidic residues" evidence="4">
    <location>
        <begin position="183"/>
        <end position="192"/>
    </location>
</feature>
<feature type="compositionally biased region" description="Basic residues" evidence="4">
    <location>
        <begin position="193"/>
        <end position="230"/>
    </location>
</feature>
<feature type="compositionally biased region" description="Basic residues" evidence="4">
    <location>
        <begin position="238"/>
        <end position="262"/>
    </location>
</feature>
<feature type="compositionally biased region" description="Basic and acidic residues" evidence="4">
    <location>
        <begin position="263"/>
        <end position="340"/>
    </location>
</feature>
<feature type="compositionally biased region" description="Basic residues" evidence="4">
    <location>
        <begin position="357"/>
        <end position="373"/>
    </location>
</feature>
<feature type="compositionally biased region" description="Basic and acidic residues" evidence="4">
    <location>
        <begin position="404"/>
        <end position="453"/>
    </location>
</feature>
<feature type="compositionally biased region" description="Basic and acidic residues" evidence="4">
    <location>
        <begin position="463"/>
        <end position="474"/>
    </location>
</feature>
<feature type="modified residue" description="Phosphoserine" evidence="2">
    <location>
        <position position="174"/>
    </location>
</feature>
<feature type="modified residue" description="Phosphoserine" evidence="2">
    <location>
        <position position="187"/>
    </location>
</feature>
<feature type="modified residue" description="Phosphothreonine" evidence="2">
    <location>
        <position position="348"/>
    </location>
</feature>
<comment type="function">
    <text evidence="5 6">Participates in the regulation of alternative splicing by modulating the activity of other splice facors. Inhibits the splicing activity of SFRS1, SFRS2 and SFRS6. Augments the splicing activity of SFRS3.</text>
</comment>
<comment type="subunit">
    <text evidence="1 5 6">Interacts with SREK1IP1 (By similarity). Homodimer. Binds SFRS1, SFRS2, SFRS3 and SFRS6. Interacts with the spliceosome.</text>
</comment>
<comment type="interaction">
    <interactant intactId="EBI-6452221">
        <id>Q9JKL7</id>
    </interactant>
    <interactant intactId="EBI-746012">
        <id>Q92841</id>
        <label>DDX17</label>
    </interactant>
    <organismsDiffer>true</organismsDiffer>
    <experiments>3</experiments>
</comment>
<comment type="interaction">
    <interactant intactId="EBI-6452221">
        <id>Q9JKL7</id>
    </interactant>
    <interactant intactId="EBI-743526">
        <id>P38159</id>
        <label>RBMX</label>
    </interactant>
    <organismsDiffer>true</organismsDiffer>
    <experiments>3</experiments>
</comment>
<comment type="interaction">
    <interactant intactId="EBI-6452221">
        <id>Q9JKL7</id>
    </interactant>
    <interactant intactId="EBI-348298">
        <id>Q15424</id>
        <label>SAFB</label>
    </interactant>
    <organismsDiffer>true</organismsDiffer>
    <experiments>3</experiments>
</comment>
<comment type="interaction">
    <interactant intactId="EBI-6452221">
        <id>Q9JKL7</id>
    </interactant>
    <interactant intactId="EBI-372557">
        <id>P84103</id>
        <label>SRSF3</label>
    </interactant>
    <organismsDiffer>true</organismsDiffer>
    <experiments>3</experiments>
</comment>
<comment type="interaction">
    <interactant intactId="EBI-6452221">
        <id>Q9JKL7</id>
    </interactant>
    <interactant intactId="EBI-398885">
        <id>Q16629</id>
        <label>SRSF7</label>
    </interactant>
    <organismsDiffer>true</organismsDiffer>
    <experiments>3</experiments>
</comment>
<comment type="subcellular location">
    <subcellularLocation>
        <location>Nucleus</location>
    </subcellularLocation>
</comment>
<comment type="tissue specificity">
    <text evidence="6">Ubiquitous. Detected in liver, brain, lung, spleen, testis and pancreas.</text>
</comment>
<comment type="similarity">
    <text evidence="7">Belongs to the splicing factor SR family.</text>
</comment>
<name>SREK1_RAT</name>
<organism>
    <name type="scientific">Rattus norvegicus</name>
    <name type="common">Rat</name>
    <dbReference type="NCBI Taxonomy" id="10116"/>
    <lineage>
        <taxon>Eukaryota</taxon>
        <taxon>Metazoa</taxon>
        <taxon>Chordata</taxon>
        <taxon>Craniata</taxon>
        <taxon>Vertebrata</taxon>
        <taxon>Euteleostomi</taxon>
        <taxon>Mammalia</taxon>
        <taxon>Eutheria</taxon>
        <taxon>Euarchontoglires</taxon>
        <taxon>Glires</taxon>
        <taxon>Rodentia</taxon>
        <taxon>Myomorpha</taxon>
        <taxon>Muroidea</taxon>
        <taxon>Muridae</taxon>
        <taxon>Murinae</taxon>
        <taxon>Rattus</taxon>
    </lineage>
</organism>
<proteinExistence type="evidence at protein level"/>
<reference key="1">
    <citation type="journal article" date="2000" name="Mol. Cell. Biol.">
        <title>Identification and characterization of a novel serine-arginine-rich splicing regulatory protein.</title>
        <authorList>
            <person name="Barnard D.C."/>
            <person name="Patton J.G."/>
        </authorList>
    </citation>
    <scope>NUCLEOTIDE SEQUENCE [MRNA]</scope>
    <scope>FUNCTION</scope>
    <scope>HOMODIMERIZATION</scope>
    <scope>INTERACTION WITH SFRS1; SFRS2; SFRS3 AND SFRS6</scope>
    <source>
        <tissue>Brain</tissue>
    </source>
</reference>
<reference key="2">
    <citation type="journal article" date="2002" name="RNA">
        <title>Regulation of alternative splicing by SRrp86 through coactivation and repression of specific SR proteins.</title>
        <authorList>
            <person name="Barnard D.C."/>
            <person name="Li J."/>
            <person name="Peng R."/>
            <person name="Patton J.G."/>
        </authorList>
    </citation>
    <scope>FUNCTION</scope>
    <scope>TISSUE SPECIFICITY</scope>
    <scope>INTERACTION WITH SFRS2 AND SFRS3</scope>
</reference>
<keyword id="KW-0507">mRNA processing</keyword>
<keyword id="KW-0508">mRNA splicing</keyword>
<keyword id="KW-0539">Nucleus</keyword>
<keyword id="KW-0597">Phosphoprotein</keyword>
<keyword id="KW-1185">Reference proteome</keyword>
<keyword id="KW-0747">Spliceosome</keyword>
<protein>
    <recommendedName>
        <fullName>Splicing regulatory glutamine/lysine-rich protein 1</fullName>
    </recommendedName>
    <alternativeName>
        <fullName>SR-related protein of 86 kDa</fullName>
    </alternativeName>
    <alternativeName>
        <fullName>Serine/arginine-rich-splicing regulatory protein 86</fullName>
        <shortName>SRrp86</shortName>
    </alternativeName>
    <alternativeName>
        <fullName>Splicing factor, arginine/serine-rich 12</fullName>
    </alternativeName>
</protein>
<gene>
    <name type="primary">Srek1</name>
    <name type="synonym">Sfrs12</name>
    <name type="synonym">Srrp86</name>
</gene>
<evidence type="ECO:0000250" key="1"/>
<evidence type="ECO:0000250" key="2">
    <source>
        <dbReference type="UniProtKB" id="Q8WXA9"/>
    </source>
</evidence>
<evidence type="ECO:0000255" key="3">
    <source>
        <dbReference type="PROSITE-ProRule" id="PRU00176"/>
    </source>
</evidence>
<evidence type="ECO:0000256" key="4">
    <source>
        <dbReference type="SAM" id="MobiDB-lite"/>
    </source>
</evidence>
<evidence type="ECO:0000269" key="5">
    <source>
    </source>
</evidence>
<evidence type="ECO:0000269" key="6">
    <source>
    </source>
</evidence>
<evidence type="ECO:0000305" key="7"/>
<dbReference type="EMBL" id="AF234765">
    <property type="protein sequence ID" value="AAF37578.1"/>
    <property type="molecule type" value="mRNA"/>
</dbReference>
<dbReference type="RefSeq" id="NP_064477.1">
    <property type="nucleotide sequence ID" value="NM_020092.1"/>
</dbReference>
<dbReference type="SMR" id="Q9JKL7"/>
<dbReference type="FunCoup" id="Q9JKL7">
    <property type="interactions" value="1536"/>
</dbReference>
<dbReference type="IntAct" id="Q9JKL7">
    <property type="interactions" value="53"/>
</dbReference>
<dbReference type="STRING" id="10116.ENSRNOP00000049050"/>
<dbReference type="PhosphoSitePlus" id="Q9JKL7"/>
<dbReference type="PaxDb" id="10116-ENSRNOP00000049050"/>
<dbReference type="GeneID" id="56763"/>
<dbReference type="KEGG" id="rno:56763"/>
<dbReference type="UCSC" id="RGD:621696">
    <property type="organism name" value="rat"/>
</dbReference>
<dbReference type="AGR" id="RGD:621696"/>
<dbReference type="CTD" id="140890"/>
<dbReference type="RGD" id="621696">
    <property type="gene designation" value="Srek1"/>
</dbReference>
<dbReference type="eggNOG" id="KOG4676">
    <property type="taxonomic scope" value="Eukaryota"/>
</dbReference>
<dbReference type="InParanoid" id="Q9JKL7"/>
<dbReference type="OrthoDB" id="7763451at2759"/>
<dbReference type="PRO" id="PR:Q9JKL7"/>
<dbReference type="Proteomes" id="UP000002494">
    <property type="component" value="Unplaced"/>
</dbReference>
<dbReference type="GO" id="GO:0005681">
    <property type="term" value="C:spliceosomal complex"/>
    <property type="evidence" value="ECO:0007669"/>
    <property type="project" value="UniProtKB-KW"/>
</dbReference>
<dbReference type="GO" id="GO:0003723">
    <property type="term" value="F:RNA binding"/>
    <property type="evidence" value="ECO:0007669"/>
    <property type="project" value="InterPro"/>
</dbReference>
<dbReference type="GO" id="GO:0006397">
    <property type="term" value="P:mRNA processing"/>
    <property type="evidence" value="ECO:0007669"/>
    <property type="project" value="UniProtKB-KW"/>
</dbReference>
<dbReference type="GO" id="GO:0008380">
    <property type="term" value="P:RNA splicing"/>
    <property type="evidence" value="ECO:0007669"/>
    <property type="project" value="UniProtKB-KW"/>
</dbReference>
<dbReference type="CDD" id="cd12260">
    <property type="entry name" value="RRM2_SREK1"/>
    <property type="match status" value="1"/>
</dbReference>
<dbReference type="FunFam" id="3.30.70.330:FF:000142">
    <property type="entry name" value="splicing regulatory glutamine/lysine-rich protein 1 isoform X1"/>
    <property type="match status" value="1"/>
</dbReference>
<dbReference type="Gene3D" id="3.30.70.330">
    <property type="match status" value="1"/>
</dbReference>
<dbReference type="InterPro" id="IPR012677">
    <property type="entry name" value="Nucleotide-bd_a/b_plait_sf"/>
</dbReference>
<dbReference type="InterPro" id="IPR035979">
    <property type="entry name" value="RBD_domain_sf"/>
</dbReference>
<dbReference type="InterPro" id="IPR000504">
    <property type="entry name" value="RRM_dom"/>
</dbReference>
<dbReference type="InterPro" id="IPR034192">
    <property type="entry name" value="SREK1_RRM2"/>
</dbReference>
<dbReference type="PANTHER" id="PTHR32343">
    <property type="entry name" value="SERINE/ARGININE-RICH SPLICING FACTOR"/>
    <property type="match status" value="1"/>
</dbReference>
<dbReference type="PANTHER" id="PTHR32343:SF71">
    <property type="entry name" value="SPLICING REGULATORY GLUTAMIC ACID AND LYSINE RICH PROTEIN 1"/>
    <property type="match status" value="1"/>
</dbReference>
<dbReference type="Pfam" id="PF00076">
    <property type="entry name" value="RRM_1"/>
    <property type="match status" value="1"/>
</dbReference>
<dbReference type="SMART" id="SM00360">
    <property type="entry name" value="RRM"/>
    <property type="match status" value="1"/>
</dbReference>
<dbReference type="SUPFAM" id="SSF54928">
    <property type="entry name" value="RNA-binding domain, RBD"/>
    <property type="match status" value="1"/>
</dbReference>
<dbReference type="PROSITE" id="PS50102">
    <property type="entry name" value="RRM"/>
    <property type="match status" value="1"/>
</dbReference>
<sequence>MTSLVPGAGLLPIPTSSPLTAVSSLGVSLSSLGAIPAAALDPNITALGEIPQPPLMGNVDPSKIDEIRRTVYVGNLNSQTTTADQLLEFFKQVGEVKFVRMAGDETQPTRFAFVEFADQNSVPRALAFNGVMFGDRPLKINHSNNAIVKPPEMTPQAAAKELEEVMKRVREAQSFISAAIEPESGKSNERKGGRSRSHTRSKSRSSSKSHSRRKRSQSKHRSRSHNRSRSRQKDRARSKSPHKKRSKSRERRKSRSRSRSRDKRKDTREKVKERVKEREREKEKEREKEREKDKERGKNKDKDREKEKDHEKERDKEKEKEQDKDKEREKDRSKEADEKRKKEKKSRTPPRSYNSSRRSRSASRERRRRRSRSSSRSPRTSKTIKRKSSRSPSPRGRNKKEKKREKERDHISDRRERERSTSTKKSSSDRDGKEKVEKTNTPVKEKEHSKEADSTVSTDADEKDTARTEEESKAQHNGNCQPHEERLCSTADAV</sequence>